<comment type="similarity">
    <text evidence="1">Belongs to the FHIP family.</text>
</comment>
<sequence>MWGRLGAFLQQAVETREPTQDLLQSFIQHWKGVTQYYLETSDESCPARETDIPWRLRQLIDILVFEESNNGSQLSSGDEEDSGAGSHAGPCMEYLLQHKILETLCTLAKAEYPPGMRQQVLLFYSRLLAKVQRPLLHYLSVHRPVQKLIALAEDPVGATAQKEELQFLTAVCTKLEKDPSLLVHVLEEGSGSRVRCSGGEQDGETEARNHKPRQNLFKALLRLCTCQKGRLCVRAREALLRVLHSAQQEGPVHLIVQSKLSQYVTEHLCELHRCIPLSIHPCDITALQETDWRKDSGSQESDGMENAEAALQRFLCWVEYCDCLVRESHEVVAMEITRSIKEGYLQGILQPELLEVSELSILRSTAILTAVLHRFTATPLLRQFLTFLFGDERGPETRGDRGSQLRSQLIQRCNHLSDEISLASLRLFEEILQMPEEIALHSLVIRNLETRSYLAGGQDESRGQESETWDGAEELEEDPYFTDGFPDTGIRLPRSDNAHRTEPAGTEQWVKSFLSLVPEEIKSSDTGYDGYLQDAIVQYRACCQQVAQWGWPVSSKGTGHSQQEFYEGHFMEVLLGRLGGILDQPYDVNLQVTSLLSRLALFPHPNLQEYLLNPFITLAPGARSLFSVLVRVVADLAQRSLRVPDLQEMLLLVRRQLLANSANEQLNHVTLCRGAVVLEEFCKELAAAACVTHSPVGF</sequence>
<feature type="chain" id="PRO_0000284652" description="FHF complex subunit HOOK-interacting protein 2B">
    <location>
        <begin position="1"/>
        <end position="698"/>
    </location>
</feature>
<protein>
    <recommendedName>
        <fullName>FHF complex subunit HOOK-interacting protein 2B</fullName>
        <shortName>FHIP2B</shortName>
    </recommendedName>
</protein>
<evidence type="ECO:0000305" key="1"/>
<reference key="1">
    <citation type="submission" date="2006-08" db="EMBL/GenBank/DDBJ databases">
        <authorList>
            <consortium name="NIH - Xenopus Gene Collection (XGC) project"/>
        </authorList>
    </citation>
    <scope>NUCLEOTIDE SEQUENCE [LARGE SCALE MRNA]</scope>
    <source>
        <tissue>Testis</tissue>
    </source>
</reference>
<name>FHI2B_XENTR</name>
<proteinExistence type="evidence at transcript level"/>
<gene>
    <name type="primary">fhip2b</name>
    <name type="synonym">fam160b2</name>
</gene>
<accession>Q0P4Q0</accession>
<organism>
    <name type="scientific">Xenopus tropicalis</name>
    <name type="common">Western clawed frog</name>
    <name type="synonym">Silurana tropicalis</name>
    <dbReference type="NCBI Taxonomy" id="8364"/>
    <lineage>
        <taxon>Eukaryota</taxon>
        <taxon>Metazoa</taxon>
        <taxon>Chordata</taxon>
        <taxon>Craniata</taxon>
        <taxon>Vertebrata</taxon>
        <taxon>Euteleostomi</taxon>
        <taxon>Amphibia</taxon>
        <taxon>Batrachia</taxon>
        <taxon>Anura</taxon>
        <taxon>Pipoidea</taxon>
        <taxon>Pipidae</taxon>
        <taxon>Xenopodinae</taxon>
        <taxon>Xenopus</taxon>
        <taxon>Silurana</taxon>
    </lineage>
</organism>
<keyword id="KW-1185">Reference proteome</keyword>
<dbReference type="EMBL" id="BC121955">
    <property type="protein sequence ID" value="AAI21956.1"/>
    <property type="molecule type" value="mRNA"/>
</dbReference>
<dbReference type="RefSeq" id="NP_001072514.1">
    <property type="nucleotide sequence ID" value="NM_001079046.1"/>
</dbReference>
<dbReference type="SMR" id="Q0P4Q0"/>
<dbReference type="STRING" id="8364.ENSXETP00000028827"/>
<dbReference type="DNASU" id="779969"/>
<dbReference type="GeneID" id="779969"/>
<dbReference type="KEGG" id="xtr:779969"/>
<dbReference type="AGR" id="Xenbase:XB-GENE-5801105"/>
<dbReference type="CTD" id="64760"/>
<dbReference type="Xenbase" id="XB-GENE-5801105">
    <property type="gene designation" value="fhip2b"/>
</dbReference>
<dbReference type="HOGENOM" id="CLU_023718_0_0_1"/>
<dbReference type="InParanoid" id="Q0P4Q0"/>
<dbReference type="OMA" id="CDHLIME"/>
<dbReference type="OrthoDB" id="5350595at2759"/>
<dbReference type="PhylomeDB" id="Q0P4Q0"/>
<dbReference type="Proteomes" id="UP000008143">
    <property type="component" value="Chromosome 3"/>
</dbReference>
<dbReference type="Bgee" id="ENSXETG00000010539">
    <property type="expression patterns" value="Expressed in neurula embryo and 12 other cell types or tissues"/>
</dbReference>
<dbReference type="InterPro" id="IPR019384">
    <property type="entry name" value="FHIP"/>
</dbReference>
<dbReference type="InterPro" id="IPR045669">
    <property type="entry name" value="FHIP_C"/>
</dbReference>
<dbReference type="InterPro" id="IPR045668">
    <property type="entry name" value="FHIP_KELAA_motif"/>
</dbReference>
<dbReference type="PANTHER" id="PTHR21705:SF9">
    <property type="entry name" value="FHF COMPLEX SUBUNIT HOOK-INTERACTING PROTEIN 2B"/>
    <property type="match status" value="1"/>
</dbReference>
<dbReference type="PANTHER" id="PTHR21705">
    <property type="entry name" value="RAI16 PROTEIN-RELATED"/>
    <property type="match status" value="1"/>
</dbReference>
<dbReference type="Pfam" id="PF19314">
    <property type="entry name" value="DUF5917"/>
    <property type="match status" value="1"/>
</dbReference>
<dbReference type="Pfam" id="PF19311">
    <property type="entry name" value="KELAA"/>
    <property type="match status" value="1"/>
</dbReference>
<dbReference type="Pfam" id="PF10257">
    <property type="entry name" value="RAI16-like"/>
    <property type="match status" value="1"/>
</dbReference>